<organism>
    <name type="scientific">Leptospira interrogans serogroup Icterohaemorrhagiae serovar copenhageni (strain Fiocruz L1-130)</name>
    <dbReference type="NCBI Taxonomy" id="267671"/>
    <lineage>
        <taxon>Bacteria</taxon>
        <taxon>Pseudomonadati</taxon>
        <taxon>Spirochaetota</taxon>
        <taxon>Spirochaetia</taxon>
        <taxon>Leptospirales</taxon>
        <taxon>Leptospiraceae</taxon>
        <taxon>Leptospira</taxon>
    </lineage>
</organism>
<evidence type="ECO:0000255" key="1">
    <source>
        <dbReference type="HAMAP-Rule" id="MF_00182"/>
    </source>
</evidence>
<accession>Q72S34</accession>
<name>FMT_LEPIC</name>
<comment type="function">
    <text evidence="1">Attaches a formyl group to the free amino group of methionyl-tRNA(fMet). The formyl group appears to play a dual role in the initiator identity of N-formylmethionyl-tRNA by promoting its recognition by IF2 and preventing the misappropriation of this tRNA by the elongation apparatus.</text>
</comment>
<comment type="catalytic activity">
    <reaction evidence="1">
        <text>L-methionyl-tRNA(fMet) + (6R)-10-formyltetrahydrofolate = N-formyl-L-methionyl-tRNA(fMet) + (6S)-5,6,7,8-tetrahydrofolate + H(+)</text>
        <dbReference type="Rhea" id="RHEA:24380"/>
        <dbReference type="Rhea" id="RHEA-COMP:9952"/>
        <dbReference type="Rhea" id="RHEA-COMP:9953"/>
        <dbReference type="ChEBI" id="CHEBI:15378"/>
        <dbReference type="ChEBI" id="CHEBI:57453"/>
        <dbReference type="ChEBI" id="CHEBI:78530"/>
        <dbReference type="ChEBI" id="CHEBI:78844"/>
        <dbReference type="ChEBI" id="CHEBI:195366"/>
        <dbReference type="EC" id="2.1.2.9"/>
    </reaction>
</comment>
<comment type="similarity">
    <text evidence="1">Belongs to the Fmt family.</text>
</comment>
<feature type="chain" id="PRO_0000082985" description="Methionyl-tRNA formyltransferase">
    <location>
        <begin position="1"/>
        <end position="315"/>
    </location>
</feature>
<feature type="binding site" evidence="1">
    <location>
        <begin position="112"/>
        <end position="115"/>
    </location>
    <ligand>
        <name>(6S)-5,6,7,8-tetrahydrofolate</name>
        <dbReference type="ChEBI" id="CHEBI:57453"/>
    </ligand>
</feature>
<gene>
    <name evidence="1" type="primary">fmt</name>
    <name type="ordered locus">LIC_11552</name>
</gene>
<keyword id="KW-0648">Protein biosynthesis</keyword>
<keyword id="KW-0808">Transferase</keyword>
<dbReference type="EC" id="2.1.2.9" evidence="1"/>
<dbReference type="EMBL" id="AE016823">
    <property type="protein sequence ID" value="AAS70148.1"/>
    <property type="molecule type" value="Genomic_DNA"/>
</dbReference>
<dbReference type="RefSeq" id="WP_000690652.1">
    <property type="nucleotide sequence ID" value="NC_005823.1"/>
</dbReference>
<dbReference type="SMR" id="Q72S34"/>
<dbReference type="GeneID" id="61144851"/>
<dbReference type="KEGG" id="lic:LIC_11552"/>
<dbReference type="HOGENOM" id="CLU_033347_1_1_12"/>
<dbReference type="Proteomes" id="UP000007037">
    <property type="component" value="Chromosome I"/>
</dbReference>
<dbReference type="GO" id="GO:0005829">
    <property type="term" value="C:cytosol"/>
    <property type="evidence" value="ECO:0007669"/>
    <property type="project" value="TreeGrafter"/>
</dbReference>
<dbReference type="GO" id="GO:0004479">
    <property type="term" value="F:methionyl-tRNA formyltransferase activity"/>
    <property type="evidence" value="ECO:0007669"/>
    <property type="project" value="UniProtKB-UniRule"/>
</dbReference>
<dbReference type="CDD" id="cd08646">
    <property type="entry name" value="FMT_core_Met-tRNA-FMT_N"/>
    <property type="match status" value="1"/>
</dbReference>
<dbReference type="CDD" id="cd08704">
    <property type="entry name" value="Met_tRNA_FMT_C"/>
    <property type="match status" value="1"/>
</dbReference>
<dbReference type="Gene3D" id="3.10.25.10">
    <property type="entry name" value="Formyl transferase, C-terminal domain"/>
    <property type="match status" value="1"/>
</dbReference>
<dbReference type="Gene3D" id="3.40.50.170">
    <property type="entry name" value="Formyl transferase, N-terminal domain"/>
    <property type="match status" value="1"/>
</dbReference>
<dbReference type="HAMAP" id="MF_00182">
    <property type="entry name" value="Formyl_trans"/>
    <property type="match status" value="1"/>
</dbReference>
<dbReference type="InterPro" id="IPR005794">
    <property type="entry name" value="Fmt"/>
</dbReference>
<dbReference type="InterPro" id="IPR005793">
    <property type="entry name" value="Formyl_trans_C"/>
</dbReference>
<dbReference type="InterPro" id="IPR037022">
    <property type="entry name" value="Formyl_trans_C_sf"/>
</dbReference>
<dbReference type="InterPro" id="IPR002376">
    <property type="entry name" value="Formyl_transf_N"/>
</dbReference>
<dbReference type="InterPro" id="IPR036477">
    <property type="entry name" value="Formyl_transf_N_sf"/>
</dbReference>
<dbReference type="InterPro" id="IPR011034">
    <property type="entry name" value="Formyl_transferase-like_C_sf"/>
</dbReference>
<dbReference type="InterPro" id="IPR044135">
    <property type="entry name" value="Met-tRNA-FMT_C"/>
</dbReference>
<dbReference type="InterPro" id="IPR041711">
    <property type="entry name" value="Met-tRNA-FMT_N"/>
</dbReference>
<dbReference type="NCBIfam" id="TIGR00460">
    <property type="entry name" value="fmt"/>
    <property type="match status" value="1"/>
</dbReference>
<dbReference type="PANTHER" id="PTHR11138">
    <property type="entry name" value="METHIONYL-TRNA FORMYLTRANSFERASE"/>
    <property type="match status" value="1"/>
</dbReference>
<dbReference type="PANTHER" id="PTHR11138:SF5">
    <property type="entry name" value="METHIONYL-TRNA FORMYLTRANSFERASE, MITOCHONDRIAL"/>
    <property type="match status" value="1"/>
</dbReference>
<dbReference type="Pfam" id="PF02911">
    <property type="entry name" value="Formyl_trans_C"/>
    <property type="match status" value="1"/>
</dbReference>
<dbReference type="Pfam" id="PF00551">
    <property type="entry name" value="Formyl_trans_N"/>
    <property type="match status" value="1"/>
</dbReference>
<dbReference type="SUPFAM" id="SSF50486">
    <property type="entry name" value="FMT C-terminal domain-like"/>
    <property type="match status" value="1"/>
</dbReference>
<dbReference type="SUPFAM" id="SSF53328">
    <property type="entry name" value="Formyltransferase"/>
    <property type="match status" value="1"/>
</dbReference>
<proteinExistence type="inferred from homology"/>
<reference key="1">
    <citation type="journal article" date="2004" name="J. Bacteriol.">
        <title>Comparative genomics of two Leptospira interrogans serovars reveals novel insights into physiology and pathogenesis.</title>
        <authorList>
            <person name="Nascimento A.L.T.O."/>
            <person name="Ko A.I."/>
            <person name="Martins E.A.L."/>
            <person name="Monteiro-Vitorello C.B."/>
            <person name="Ho P.L."/>
            <person name="Haake D.A."/>
            <person name="Verjovski-Almeida S."/>
            <person name="Hartskeerl R.A."/>
            <person name="Marques M.V."/>
            <person name="Oliveira M.C."/>
            <person name="Menck C.F.M."/>
            <person name="Leite L.C.C."/>
            <person name="Carrer H."/>
            <person name="Coutinho L.L."/>
            <person name="Degrave W.M."/>
            <person name="Dellagostin O.A."/>
            <person name="El-Dorry H."/>
            <person name="Ferro E.S."/>
            <person name="Ferro M.I.T."/>
            <person name="Furlan L.R."/>
            <person name="Gamberini M."/>
            <person name="Giglioti E.A."/>
            <person name="Goes-Neto A."/>
            <person name="Goldman G.H."/>
            <person name="Goldman M.H.S."/>
            <person name="Harakava R."/>
            <person name="Jeronimo S.M.B."/>
            <person name="Junqueira-de-Azevedo I.L.M."/>
            <person name="Kimura E.T."/>
            <person name="Kuramae E.E."/>
            <person name="Lemos E.G.M."/>
            <person name="Lemos M.V.F."/>
            <person name="Marino C.L."/>
            <person name="Nunes L.R."/>
            <person name="de Oliveira R.C."/>
            <person name="Pereira G.G."/>
            <person name="Reis M.S."/>
            <person name="Schriefer A."/>
            <person name="Siqueira W.J."/>
            <person name="Sommer P."/>
            <person name="Tsai S.M."/>
            <person name="Simpson A.J.G."/>
            <person name="Ferro J.A."/>
            <person name="Camargo L.E.A."/>
            <person name="Kitajima J.P."/>
            <person name="Setubal J.C."/>
            <person name="Van Sluys M.A."/>
        </authorList>
    </citation>
    <scope>NUCLEOTIDE SEQUENCE [LARGE SCALE GENOMIC DNA]</scope>
    <source>
        <strain>Fiocruz L1-130</strain>
    </source>
</reference>
<sequence>MKIGYFGTPEHSAKLLEALIDSQLTEVLFVVTNPDRPKGRSKIPEPGPVKKKALEYNIPVFQYESIKKEKEKALSDFGLFSADLYVVFAYGSILPKEVYAHSTLTSINLHGSLLPDLRGASPVQTALWKGYTKTGITIQYIGEKMDEGDILLTKEVEIAPEDNTGTLMDKITDAGIESILQLLKTYDGKPFPSVPQAHDKATYCGKIKSEDRILDWSLKSEELHNRIRALYPDMIATTTFRDKRMNILKTKPSSLSLEINPTPGKLKRLDKKRLLTQCGDGRFLEILELQPENKNRMTASDFLNGFRIQEGETFG</sequence>
<protein>
    <recommendedName>
        <fullName evidence="1">Methionyl-tRNA formyltransferase</fullName>
        <ecNumber evidence="1">2.1.2.9</ecNumber>
    </recommendedName>
</protein>